<proteinExistence type="inferred from homology"/>
<comment type="function">
    <text evidence="1">Nucleotide-binding protein.</text>
</comment>
<comment type="similarity">
    <text evidence="1">Belongs to the YajQ family.</text>
</comment>
<organism>
    <name type="scientific">Pseudomonas fluorescens (strain SBW25)</name>
    <dbReference type="NCBI Taxonomy" id="216595"/>
    <lineage>
        <taxon>Bacteria</taxon>
        <taxon>Pseudomonadati</taxon>
        <taxon>Pseudomonadota</taxon>
        <taxon>Gammaproteobacteria</taxon>
        <taxon>Pseudomonadales</taxon>
        <taxon>Pseudomonadaceae</taxon>
        <taxon>Pseudomonas</taxon>
    </lineage>
</organism>
<feature type="chain" id="PRO_1000212339" description="Nucleotide-binding protein PFLU_4927">
    <location>
        <begin position="1"/>
        <end position="161"/>
    </location>
</feature>
<accession>C3JYU1</accession>
<evidence type="ECO:0000255" key="1">
    <source>
        <dbReference type="HAMAP-Rule" id="MF_00632"/>
    </source>
</evidence>
<dbReference type="EMBL" id="AM181176">
    <property type="protein sequence ID" value="CAY51844.1"/>
    <property type="molecule type" value="Genomic_DNA"/>
</dbReference>
<dbReference type="RefSeq" id="WP_003209785.1">
    <property type="nucleotide sequence ID" value="NC_012660.1"/>
</dbReference>
<dbReference type="SMR" id="C3JYU1"/>
<dbReference type="STRING" id="294.SRM1_04357"/>
<dbReference type="eggNOG" id="COG1666">
    <property type="taxonomic scope" value="Bacteria"/>
</dbReference>
<dbReference type="HOGENOM" id="CLU_099839_1_0_6"/>
<dbReference type="OrthoDB" id="9801447at2"/>
<dbReference type="GO" id="GO:0005829">
    <property type="term" value="C:cytosol"/>
    <property type="evidence" value="ECO:0007669"/>
    <property type="project" value="TreeGrafter"/>
</dbReference>
<dbReference type="GO" id="GO:0000166">
    <property type="term" value="F:nucleotide binding"/>
    <property type="evidence" value="ECO:0007669"/>
    <property type="project" value="TreeGrafter"/>
</dbReference>
<dbReference type="CDD" id="cd11740">
    <property type="entry name" value="YajQ_like"/>
    <property type="match status" value="1"/>
</dbReference>
<dbReference type="Gene3D" id="3.30.70.860">
    <property type="match status" value="1"/>
</dbReference>
<dbReference type="Gene3D" id="3.30.70.990">
    <property type="entry name" value="YajQ-like, domain 2"/>
    <property type="match status" value="1"/>
</dbReference>
<dbReference type="HAMAP" id="MF_00632">
    <property type="entry name" value="YajQ"/>
    <property type="match status" value="1"/>
</dbReference>
<dbReference type="InterPro" id="IPR007551">
    <property type="entry name" value="DUF520"/>
</dbReference>
<dbReference type="InterPro" id="IPR035571">
    <property type="entry name" value="UPF0234-like_C"/>
</dbReference>
<dbReference type="InterPro" id="IPR035570">
    <property type="entry name" value="UPF0234_N"/>
</dbReference>
<dbReference type="InterPro" id="IPR036183">
    <property type="entry name" value="YajQ-like_sf"/>
</dbReference>
<dbReference type="NCBIfam" id="NF003819">
    <property type="entry name" value="PRK05412.1"/>
    <property type="match status" value="1"/>
</dbReference>
<dbReference type="PANTHER" id="PTHR30476">
    <property type="entry name" value="UPF0234 PROTEIN YAJQ"/>
    <property type="match status" value="1"/>
</dbReference>
<dbReference type="PANTHER" id="PTHR30476:SF0">
    <property type="entry name" value="UPF0234 PROTEIN YAJQ"/>
    <property type="match status" value="1"/>
</dbReference>
<dbReference type="Pfam" id="PF04461">
    <property type="entry name" value="DUF520"/>
    <property type="match status" value="1"/>
</dbReference>
<dbReference type="SUPFAM" id="SSF89963">
    <property type="entry name" value="YajQ-like"/>
    <property type="match status" value="2"/>
</dbReference>
<name>Y4927_PSEFS</name>
<keyword id="KW-0547">Nucleotide-binding</keyword>
<sequence>MPSFDVVSELDKHEVTNAVENAVKELDRRYDLKGKGSFEFKEKELTVNLTAEADFQLEAMIEILKLSLVKRKIDAQCLEIKDAYASGKLMKQEAVLKEGIDKELAKKIVAHVKDAKLKVQAAIQGEQVRITGKKRDDLQEAIAALRAKTFDMPLQFNNFRD</sequence>
<reference key="1">
    <citation type="journal article" date="2009" name="Genome Biol.">
        <title>Genomic and genetic analyses of diversity and plant interactions of Pseudomonas fluorescens.</title>
        <authorList>
            <person name="Silby M.W."/>
            <person name="Cerdeno-Tarraga A.M."/>
            <person name="Vernikos G.S."/>
            <person name="Giddens S.R."/>
            <person name="Jackson R.W."/>
            <person name="Preston G.M."/>
            <person name="Zhang X.-X."/>
            <person name="Moon C.D."/>
            <person name="Gehrig S.M."/>
            <person name="Godfrey S.A.C."/>
            <person name="Knight C.G."/>
            <person name="Malone J.G."/>
            <person name="Robinson Z."/>
            <person name="Spiers A.J."/>
            <person name="Harris S."/>
            <person name="Challis G.L."/>
            <person name="Yaxley A.M."/>
            <person name="Harris D."/>
            <person name="Seeger K."/>
            <person name="Murphy L."/>
            <person name="Rutter S."/>
            <person name="Squares R."/>
            <person name="Quail M.A."/>
            <person name="Saunders E."/>
            <person name="Mavromatis K."/>
            <person name="Brettin T.S."/>
            <person name="Bentley S.D."/>
            <person name="Hothersall J."/>
            <person name="Stephens E."/>
            <person name="Thomas C.M."/>
            <person name="Parkhill J."/>
            <person name="Levy S.B."/>
            <person name="Rainey P.B."/>
            <person name="Thomson N.R."/>
        </authorList>
    </citation>
    <scope>NUCLEOTIDE SEQUENCE [LARGE SCALE GENOMIC DNA]</scope>
    <source>
        <strain>SBW25</strain>
    </source>
</reference>
<protein>
    <recommendedName>
        <fullName evidence="1">Nucleotide-binding protein PFLU_4927</fullName>
    </recommendedName>
</protein>
<gene>
    <name type="ordered locus">PFLU_4927</name>
</gene>